<comment type="subunit">
    <text>Myosin is a hexamer of 2 heavy chains and 4 light chains (two regulatory light chains and two essential light chains).</text>
</comment>
<comment type="miscellaneous">
    <text>This chain binds calcium.</text>
</comment>
<protein>
    <recommendedName>
        <fullName>Myosin regulatory light chain 2</fullName>
    </recommendedName>
</protein>
<gene>
    <name type="primary">mlc-2</name>
    <name type="ORF">C36E6.5</name>
</gene>
<name>MLR2_CAEEL</name>
<feature type="chain" id="PRO_0000198761" description="Myosin regulatory light chain 2">
    <location>
        <begin position="1"/>
        <end position="170"/>
    </location>
</feature>
<feature type="domain" description="EF-hand 1" evidence="1">
    <location>
        <begin position="24"/>
        <end position="59"/>
    </location>
</feature>
<feature type="domain" description="EF-hand 2" evidence="1">
    <location>
        <begin position="93"/>
        <end position="128"/>
    </location>
</feature>
<feature type="region of interest" description="Disordered" evidence="2">
    <location>
        <begin position="1"/>
        <end position="22"/>
    </location>
</feature>
<feature type="compositionally biased region" description="Basic residues" evidence="2">
    <location>
        <begin position="1"/>
        <end position="13"/>
    </location>
</feature>
<feature type="binding site" evidence="1">
    <location>
        <position position="37"/>
    </location>
    <ligand>
        <name>Ca(2+)</name>
        <dbReference type="ChEBI" id="CHEBI:29108"/>
    </ligand>
</feature>
<feature type="binding site" evidence="1">
    <location>
        <position position="39"/>
    </location>
    <ligand>
        <name>Ca(2+)</name>
        <dbReference type="ChEBI" id="CHEBI:29108"/>
    </ligand>
</feature>
<feature type="binding site" evidence="1">
    <location>
        <position position="41"/>
    </location>
    <ligand>
        <name>Ca(2+)</name>
        <dbReference type="ChEBI" id="CHEBI:29108"/>
    </ligand>
</feature>
<feature type="binding site" evidence="1">
    <location>
        <position position="48"/>
    </location>
    <ligand>
        <name>Ca(2+)</name>
        <dbReference type="ChEBI" id="CHEBI:29108"/>
    </ligand>
</feature>
<proteinExistence type="predicted"/>
<organism>
    <name type="scientific">Caenorhabditis elegans</name>
    <dbReference type="NCBI Taxonomy" id="6239"/>
    <lineage>
        <taxon>Eukaryota</taxon>
        <taxon>Metazoa</taxon>
        <taxon>Ecdysozoa</taxon>
        <taxon>Nematoda</taxon>
        <taxon>Chromadorea</taxon>
        <taxon>Rhabditida</taxon>
        <taxon>Rhabditina</taxon>
        <taxon>Rhabditomorpha</taxon>
        <taxon>Rhabditoidea</taxon>
        <taxon>Rhabditidae</taxon>
        <taxon>Peloderinae</taxon>
        <taxon>Caenorhabditis</taxon>
    </lineage>
</organism>
<keyword id="KW-0106">Calcium</keyword>
<keyword id="KW-0479">Metal-binding</keyword>
<keyword id="KW-0505">Motor protein</keyword>
<keyword id="KW-0518">Myosin</keyword>
<keyword id="KW-1185">Reference proteome</keyword>
<keyword id="KW-0677">Repeat</keyword>
<accession>P19626</accession>
<reference key="1">
    <citation type="journal article" date="1988" name="Mol. Cell. Biol.">
        <title>Regulatory myosin light-chain genes of Caenorhabditis elegans.</title>
        <authorList>
            <person name="Cummins C."/>
            <person name="Anderson P."/>
        </authorList>
    </citation>
    <scope>NUCLEOTIDE SEQUENCE [GENOMIC DNA]</scope>
    <source>
        <strain>Bristol N2</strain>
    </source>
</reference>
<reference key="2">
    <citation type="journal article" date="1998" name="Science">
        <title>Genome sequence of the nematode C. elegans: a platform for investigating biology.</title>
        <authorList>
            <consortium name="The C. elegans sequencing consortium"/>
        </authorList>
    </citation>
    <scope>NUCLEOTIDE SEQUENCE [LARGE SCALE GENOMIC DNA]</scope>
    <source>
        <strain>Bristol N2</strain>
    </source>
</reference>
<sequence length="170" mass="18603">MSKAAKKKSSKKRSGSEAAQFDQKTIQEFKEAFGIMDQNKDGIIDKSDLKDLYASMGQIAPDSQIDAMIKEASGPINFTVFLTLFGERLTGTDPEATIVGAFAMFDKKDCGKIKEDDLIKILQNKRGEPLDEDEVKAMYKGKPPIEGGEVDYKAFAHLITTGAQDELASA</sequence>
<evidence type="ECO:0000255" key="1">
    <source>
        <dbReference type="PROSITE-ProRule" id="PRU00448"/>
    </source>
</evidence>
<evidence type="ECO:0000256" key="2">
    <source>
        <dbReference type="SAM" id="MobiDB-lite"/>
    </source>
</evidence>
<dbReference type="EMBL" id="M23366">
    <property type="protein sequence ID" value="AAA28114.1"/>
    <property type="molecule type" value="Genomic_DNA"/>
</dbReference>
<dbReference type="EMBL" id="FO080802">
    <property type="protein sequence ID" value="CCD66902.1"/>
    <property type="molecule type" value="Genomic_DNA"/>
</dbReference>
<dbReference type="PIR" id="B31377">
    <property type="entry name" value="B31377"/>
</dbReference>
<dbReference type="RefSeq" id="NP_510828.1">
    <property type="nucleotide sequence ID" value="NM_078427.10"/>
</dbReference>
<dbReference type="SMR" id="P19626"/>
<dbReference type="BioGRID" id="46650">
    <property type="interactions" value="16"/>
</dbReference>
<dbReference type="DIP" id="DIP-24755N"/>
<dbReference type="FunCoup" id="P19626">
    <property type="interactions" value="16"/>
</dbReference>
<dbReference type="IntAct" id="P19626">
    <property type="interactions" value="1"/>
</dbReference>
<dbReference type="STRING" id="6239.C36E6.5.1"/>
<dbReference type="PaxDb" id="6239-C36E6.5"/>
<dbReference type="PeptideAtlas" id="P19626"/>
<dbReference type="EnsemblMetazoa" id="C36E6.5.1">
    <property type="protein sequence ID" value="C36E6.5.1"/>
    <property type="gene ID" value="WBGene00003370"/>
</dbReference>
<dbReference type="GeneID" id="181775"/>
<dbReference type="KEGG" id="cel:CELE_C36E6.5"/>
<dbReference type="UCSC" id="C36E6.5.1">
    <property type="organism name" value="c. elegans"/>
</dbReference>
<dbReference type="AGR" id="WB:WBGene00003370"/>
<dbReference type="CTD" id="181775"/>
<dbReference type="WormBase" id="C36E6.5">
    <property type="protein sequence ID" value="CE20542"/>
    <property type="gene ID" value="WBGene00003370"/>
    <property type="gene designation" value="mlc-2"/>
</dbReference>
<dbReference type="eggNOG" id="KOG0031">
    <property type="taxonomic scope" value="Eukaryota"/>
</dbReference>
<dbReference type="GeneTree" id="ENSGT00970000196646"/>
<dbReference type="HOGENOM" id="CLU_061288_9_3_1"/>
<dbReference type="InParanoid" id="P19626"/>
<dbReference type="OMA" id="MKEMLMT"/>
<dbReference type="OrthoDB" id="429467at2759"/>
<dbReference type="PhylomeDB" id="P19626"/>
<dbReference type="Reactome" id="R-CEL-445355">
    <property type="pathway name" value="Smooth Muscle Contraction"/>
</dbReference>
<dbReference type="Reactome" id="R-CEL-5627123">
    <property type="pathway name" value="RHO GTPases activate PAKs"/>
</dbReference>
<dbReference type="SignaLink" id="P19626"/>
<dbReference type="PRO" id="PR:P19626"/>
<dbReference type="Proteomes" id="UP000001940">
    <property type="component" value="Chromosome X"/>
</dbReference>
<dbReference type="Bgee" id="WBGene00003370">
    <property type="expression patterns" value="Expressed in larva and 10 other cell types or tissues"/>
</dbReference>
<dbReference type="GO" id="GO:0005737">
    <property type="term" value="C:cytoplasm"/>
    <property type="evidence" value="ECO:0000318"/>
    <property type="project" value="GO_Central"/>
</dbReference>
<dbReference type="GO" id="GO:0016460">
    <property type="term" value="C:myosin II complex"/>
    <property type="evidence" value="ECO:0000318"/>
    <property type="project" value="GO_Central"/>
</dbReference>
<dbReference type="GO" id="GO:0005509">
    <property type="term" value="F:calcium ion binding"/>
    <property type="evidence" value="ECO:0007669"/>
    <property type="project" value="InterPro"/>
</dbReference>
<dbReference type="GO" id="GO:0032036">
    <property type="term" value="F:myosin heavy chain binding"/>
    <property type="evidence" value="ECO:0000318"/>
    <property type="project" value="GO_Central"/>
</dbReference>
<dbReference type="GO" id="GO:0040011">
    <property type="term" value="P:locomotion"/>
    <property type="evidence" value="ECO:0000316"/>
    <property type="project" value="WormBase"/>
</dbReference>
<dbReference type="GO" id="GO:0002119">
    <property type="term" value="P:nematode larval development"/>
    <property type="evidence" value="ECO:0000315"/>
    <property type="project" value="WormBase"/>
</dbReference>
<dbReference type="GO" id="GO:0006937">
    <property type="term" value="P:regulation of muscle contraction"/>
    <property type="evidence" value="ECO:0000316"/>
    <property type="project" value="WormBase"/>
</dbReference>
<dbReference type="GO" id="GO:0043051">
    <property type="term" value="P:regulation of nematode pharyngeal pumping"/>
    <property type="evidence" value="ECO:0000315"/>
    <property type="project" value="WormBase"/>
</dbReference>
<dbReference type="CDD" id="cd00051">
    <property type="entry name" value="EFh"/>
    <property type="match status" value="1"/>
</dbReference>
<dbReference type="FunFam" id="1.10.238.10:FF:000324">
    <property type="entry name" value="EF hand"/>
    <property type="match status" value="1"/>
</dbReference>
<dbReference type="FunFam" id="1.10.238.10:FF:000007">
    <property type="entry name" value="Putative myosin regulatory light chain sqh"/>
    <property type="match status" value="1"/>
</dbReference>
<dbReference type="Gene3D" id="1.10.238.10">
    <property type="entry name" value="EF-hand"/>
    <property type="match status" value="2"/>
</dbReference>
<dbReference type="InterPro" id="IPR011992">
    <property type="entry name" value="EF-hand-dom_pair"/>
</dbReference>
<dbReference type="InterPro" id="IPR018247">
    <property type="entry name" value="EF_Hand_1_Ca_BS"/>
</dbReference>
<dbReference type="InterPro" id="IPR002048">
    <property type="entry name" value="EF_hand_dom"/>
</dbReference>
<dbReference type="InterPro" id="IPR050403">
    <property type="entry name" value="Myosin_RLC"/>
</dbReference>
<dbReference type="PANTHER" id="PTHR23049">
    <property type="entry name" value="MYOSIN REGULATORY LIGHT CHAIN 2"/>
    <property type="match status" value="1"/>
</dbReference>
<dbReference type="Pfam" id="PF13405">
    <property type="entry name" value="EF-hand_6"/>
    <property type="match status" value="1"/>
</dbReference>
<dbReference type="SMART" id="SM00054">
    <property type="entry name" value="EFh"/>
    <property type="match status" value="2"/>
</dbReference>
<dbReference type="SUPFAM" id="SSF47473">
    <property type="entry name" value="EF-hand"/>
    <property type="match status" value="1"/>
</dbReference>
<dbReference type="PROSITE" id="PS00018">
    <property type="entry name" value="EF_HAND_1"/>
    <property type="match status" value="1"/>
</dbReference>
<dbReference type="PROSITE" id="PS50222">
    <property type="entry name" value="EF_HAND_2"/>
    <property type="match status" value="2"/>
</dbReference>